<sequence length="352" mass="40483">MDYQVSSPTYDIDYYTSEPCQKVNVKQIAARLLPPLYSLVFIFGFVGNILVVLILINCKRLKSMTDIYLLNLAISDLFFLLTVPFWAHYAAAQWDFGNTMCQLLTGLYFIGFFSGIFFIILLTIDRYLAIVHAVFALKARTVTFGVVTSVITWVVAVFASLPGIIFTRSQREGVHYTCSSHFPYSQYQFWKNFQTLKIVILGLVLPLLVMVICYSGILKTLLRCRNEKKRHRAVRLIFTIMIVYFLFWAPYNIVLLLNTFQEFFGLNNCSSSNRLDQAMQVTETLGMTHCCINPIIYAFVGEKFRNYLLVFFQKHIAKRFCKCCSIFQQEAPERASSVYTRSTGEQETSVGL</sequence>
<organism>
    <name type="scientific">Rhinopithecus avunculus</name>
    <name type="common">Tonkin snub-nosed monkey</name>
    <name type="synonym">Pygathrix avunculus</name>
    <dbReference type="NCBI Taxonomy" id="66062"/>
    <lineage>
        <taxon>Eukaryota</taxon>
        <taxon>Metazoa</taxon>
        <taxon>Chordata</taxon>
        <taxon>Craniata</taxon>
        <taxon>Vertebrata</taxon>
        <taxon>Euteleostomi</taxon>
        <taxon>Mammalia</taxon>
        <taxon>Eutheria</taxon>
        <taxon>Euarchontoglires</taxon>
        <taxon>Primates</taxon>
        <taxon>Haplorrhini</taxon>
        <taxon>Catarrhini</taxon>
        <taxon>Cercopithecidae</taxon>
        <taxon>Colobinae</taxon>
        <taxon>Rhinopithecus</taxon>
    </lineage>
</organism>
<comment type="function">
    <text evidence="1">Receptor for a number of inflammatory CC-chemokines including CCL3/MIP-1-alpha, CCL4/MIP-1-beta and RANTES and subsequently transduces a signal by increasing the intracellular calcium ion level. May play a role in the control of granulocytic lineage proliferation or differentiation. Participates in T-lymphocyte migration to the infection site by acting as a chemotactic receptor.</text>
</comment>
<comment type="subunit">
    <text evidence="1">Interacts with PRAF2. Efficient ligand binding to CCL3/MIP-1alpha and CCL4/MIP-1beta requires sulfation, O-glycosylation and sialic acid modifications. Glycosylation on Ser-6 is required for efficient binding of CCL4. Interacts with GRK2. Interacts with ARRB1 and ARRB2. Interacts with CNIH4. Interacts with S100A4; this interaction stimulates T-lymphocyte chemotaxis.</text>
</comment>
<comment type="subcellular location">
    <subcellularLocation>
        <location evidence="2">Cell membrane</location>
        <topology evidence="2">Multi-pass membrane protein</topology>
    </subcellularLocation>
</comment>
<comment type="PTM">
    <text evidence="1">Sulfated on at least 2 of the N-terminal tyrosines. Sulfation is required for efficient binding of the chemokines, CCL3 and CCL4 (By similarity).</text>
</comment>
<comment type="PTM">
    <text evidence="1">Palmitoylation in the C-terminal is important for cell surface expression.</text>
</comment>
<comment type="PTM">
    <text evidence="1">Phosphorylation on serine residues in the C-terminal is stimulated by binding CC chemokines especially by APO-RANTES.</text>
</comment>
<comment type="PTM">
    <text evidence="1">O-glycosylated, but not N-glycosylated. Ser-6 appears to be the major site even if Ser-7 may be also O-glycosylated. Also sialylated glycans present which contribute to chemokine binding. Thr-16 and Ser-17 may also be glycosylated and, if so, with small moieties such as a T-antigen.</text>
</comment>
<comment type="similarity">
    <text evidence="4">Belongs to the G-protein coupled receptor 1 family.</text>
</comment>
<feature type="chain" id="PRO_0000069277" description="C-C chemokine receptor type 5">
    <location>
        <begin position="1"/>
        <end position="352"/>
    </location>
</feature>
<feature type="topological domain" description="Extracellular" evidence="3">
    <location>
        <begin position="1"/>
        <end position="30"/>
    </location>
</feature>
<feature type="transmembrane region" description="Helical; Name=1" evidence="3">
    <location>
        <begin position="31"/>
        <end position="58"/>
    </location>
</feature>
<feature type="topological domain" description="Cytoplasmic" evidence="3">
    <location>
        <begin position="59"/>
        <end position="68"/>
    </location>
</feature>
<feature type="transmembrane region" description="Helical; Name=2" evidence="3">
    <location>
        <begin position="69"/>
        <end position="89"/>
    </location>
</feature>
<feature type="topological domain" description="Extracellular" evidence="3">
    <location>
        <begin position="90"/>
        <end position="102"/>
    </location>
</feature>
<feature type="transmembrane region" description="Helical; Name=3" evidence="3">
    <location>
        <begin position="103"/>
        <end position="124"/>
    </location>
</feature>
<feature type="topological domain" description="Cytoplasmic" evidence="3">
    <location>
        <begin position="125"/>
        <end position="141"/>
    </location>
</feature>
<feature type="transmembrane region" description="Helical; Name=4" evidence="3">
    <location>
        <begin position="142"/>
        <end position="166"/>
    </location>
</feature>
<feature type="topological domain" description="Extracellular" evidence="3">
    <location>
        <begin position="167"/>
        <end position="198"/>
    </location>
</feature>
<feature type="transmembrane region" description="Helical; Name=5" evidence="3">
    <location>
        <begin position="199"/>
        <end position="218"/>
    </location>
</feature>
<feature type="topological domain" description="Cytoplasmic" evidence="3">
    <location>
        <begin position="219"/>
        <end position="235"/>
    </location>
</feature>
<feature type="transmembrane region" description="Helical; Name=6" evidence="3">
    <location>
        <begin position="236"/>
        <end position="260"/>
    </location>
</feature>
<feature type="topological domain" description="Extracellular" evidence="3">
    <location>
        <begin position="261"/>
        <end position="277"/>
    </location>
</feature>
<feature type="transmembrane region" description="Helical; Name=7" evidence="3">
    <location>
        <begin position="278"/>
        <end position="301"/>
    </location>
</feature>
<feature type="topological domain" description="Cytoplasmic" evidence="3">
    <location>
        <begin position="302"/>
        <end position="352"/>
    </location>
</feature>
<feature type="modified residue" description="Sulfotyrosine" evidence="1">
    <location>
        <position position="3"/>
    </location>
</feature>
<feature type="modified residue" description="Sulfotyrosine" evidence="3">
    <location>
        <position position="10"/>
    </location>
</feature>
<feature type="modified residue" description="Sulfotyrosine" evidence="3">
    <location>
        <position position="14"/>
    </location>
</feature>
<feature type="modified residue" description="Sulfotyrosine" evidence="3">
    <location>
        <position position="15"/>
    </location>
</feature>
<feature type="modified residue" description="Phosphoserine; by BARK1" evidence="1">
    <location>
        <position position="336"/>
    </location>
</feature>
<feature type="modified residue" description="Phosphoserine; by BARK1" evidence="1">
    <location>
        <position position="337"/>
    </location>
</feature>
<feature type="modified residue" description="Phosphoserine; by BARK1" evidence="1">
    <location>
        <position position="342"/>
    </location>
</feature>
<feature type="modified residue" description="Phosphoserine; by BARK1" evidence="1">
    <location>
        <position position="349"/>
    </location>
</feature>
<feature type="lipid moiety-binding region" description="S-palmitoyl cysteine" evidence="1">
    <location>
        <position position="321"/>
    </location>
</feature>
<feature type="lipid moiety-binding region" description="S-palmitoyl cysteine" evidence="1">
    <location>
        <position position="323"/>
    </location>
</feature>
<feature type="lipid moiety-binding region" description="S-palmitoyl cysteine" evidence="1">
    <location>
        <position position="324"/>
    </location>
</feature>
<feature type="glycosylation site" description="O-linked (GalNAc...) serine" evidence="1">
    <location>
        <position position="6"/>
    </location>
</feature>
<feature type="glycosylation site" description="O-linked (GalNAc...) serine" evidence="1">
    <location>
        <position position="7"/>
    </location>
</feature>
<feature type="disulfide bond" evidence="1">
    <location>
        <begin position="20"/>
        <end position="269"/>
    </location>
</feature>
<feature type="disulfide bond" evidence="4">
    <location>
        <begin position="101"/>
        <end position="178"/>
    </location>
</feature>
<protein>
    <recommendedName>
        <fullName>C-C chemokine receptor type 5</fullName>
        <shortName>C-C CKR-5</shortName>
        <shortName>CC-CKR-5</shortName>
        <shortName>CCR-5</shortName>
        <shortName>CCR5</shortName>
    </recommendedName>
    <cdAntigenName>CD195</cdAntigenName>
</protein>
<accession>O97962</accession>
<reference key="1">
    <citation type="journal article" date="1999" name="Mol. Biol. Evol.">
        <title>Sequence evolution of the CCR5 chemokine receptor gene in primates.</title>
        <authorList>
            <person name="Zhang Y.-W."/>
            <person name="Ryder O.A."/>
            <person name="Zhang Y.-P."/>
        </authorList>
    </citation>
    <scope>NUCLEOTIDE SEQUENCE [GENOMIC DNA]</scope>
</reference>
<name>CCR5_RHIAV</name>
<evidence type="ECO:0000250" key="1">
    <source>
        <dbReference type="UniProtKB" id="P51681"/>
    </source>
</evidence>
<evidence type="ECO:0000250" key="2">
    <source>
        <dbReference type="UniProtKB" id="Q9XT76"/>
    </source>
</evidence>
<evidence type="ECO:0000255" key="3"/>
<evidence type="ECO:0000255" key="4">
    <source>
        <dbReference type="PROSITE-ProRule" id="PRU00521"/>
    </source>
</evidence>
<proteinExistence type="inferred from homology"/>
<keyword id="KW-1003">Cell membrane</keyword>
<keyword id="KW-1015">Disulfide bond</keyword>
<keyword id="KW-0297">G-protein coupled receptor</keyword>
<keyword id="KW-0325">Glycoprotein</keyword>
<keyword id="KW-0449">Lipoprotein</keyword>
<keyword id="KW-0472">Membrane</keyword>
<keyword id="KW-0564">Palmitate</keyword>
<keyword id="KW-0597">Phosphoprotein</keyword>
<keyword id="KW-0675">Receptor</keyword>
<keyword id="KW-0765">Sulfation</keyword>
<keyword id="KW-0807">Transducer</keyword>
<keyword id="KW-0812">Transmembrane</keyword>
<keyword id="KW-1133">Transmembrane helix</keyword>
<dbReference type="EMBL" id="AF075447">
    <property type="protein sequence ID" value="AAD19859.1"/>
    <property type="molecule type" value="Genomic_DNA"/>
</dbReference>
<dbReference type="SMR" id="O97962"/>
<dbReference type="GlyCosmos" id="O97962">
    <property type="glycosylation" value="2 sites, No reported glycans"/>
</dbReference>
<dbReference type="GO" id="GO:0005737">
    <property type="term" value="C:cytoplasm"/>
    <property type="evidence" value="ECO:0007669"/>
    <property type="project" value="TreeGrafter"/>
</dbReference>
<dbReference type="GO" id="GO:0009897">
    <property type="term" value="C:external side of plasma membrane"/>
    <property type="evidence" value="ECO:0000250"/>
    <property type="project" value="UniProtKB"/>
</dbReference>
<dbReference type="GO" id="GO:0016493">
    <property type="term" value="F:C-C chemokine receptor activity"/>
    <property type="evidence" value="ECO:0000250"/>
    <property type="project" value="UniProtKB"/>
</dbReference>
<dbReference type="GO" id="GO:0071791">
    <property type="term" value="F:chemokine (C-C motif) ligand 5 binding"/>
    <property type="evidence" value="ECO:0007669"/>
    <property type="project" value="TreeGrafter"/>
</dbReference>
<dbReference type="GO" id="GO:0019722">
    <property type="term" value="P:calcium-mediated signaling"/>
    <property type="evidence" value="ECO:0007669"/>
    <property type="project" value="TreeGrafter"/>
</dbReference>
<dbReference type="GO" id="GO:0060326">
    <property type="term" value="P:cell chemotaxis"/>
    <property type="evidence" value="ECO:0007669"/>
    <property type="project" value="TreeGrafter"/>
</dbReference>
<dbReference type="GO" id="GO:0006955">
    <property type="term" value="P:immune response"/>
    <property type="evidence" value="ECO:0007669"/>
    <property type="project" value="InterPro"/>
</dbReference>
<dbReference type="GO" id="GO:0006954">
    <property type="term" value="P:inflammatory response"/>
    <property type="evidence" value="ECO:0007669"/>
    <property type="project" value="InterPro"/>
</dbReference>
<dbReference type="GO" id="GO:0007204">
    <property type="term" value="P:positive regulation of cytosolic calcium ion concentration"/>
    <property type="evidence" value="ECO:0007669"/>
    <property type="project" value="TreeGrafter"/>
</dbReference>
<dbReference type="CDD" id="cd15184">
    <property type="entry name" value="7tmA_CCR5_CCR2"/>
    <property type="match status" value="1"/>
</dbReference>
<dbReference type="FunFam" id="1.20.1070.10:FF:000026">
    <property type="entry name" value="C-C chemokine receptor type 5"/>
    <property type="match status" value="1"/>
</dbReference>
<dbReference type="Gene3D" id="1.20.1070.10">
    <property type="entry name" value="Rhodopsin 7-helix transmembrane proteins"/>
    <property type="match status" value="1"/>
</dbReference>
<dbReference type="InterPro" id="IPR050119">
    <property type="entry name" value="CCR1-9-like"/>
</dbReference>
<dbReference type="InterPro" id="IPR002240">
    <property type="entry name" value="Chemokine_CCR5"/>
</dbReference>
<dbReference type="InterPro" id="IPR000355">
    <property type="entry name" value="Chemokine_rcpt"/>
</dbReference>
<dbReference type="InterPro" id="IPR000276">
    <property type="entry name" value="GPCR_Rhodpsn"/>
</dbReference>
<dbReference type="InterPro" id="IPR017452">
    <property type="entry name" value="GPCR_Rhodpsn_7TM"/>
</dbReference>
<dbReference type="PANTHER" id="PTHR10489:SF686">
    <property type="entry name" value="C-C CHEMOKINE RECEPTOR TYPE 5"/>
    <property type="match status" value="1"/>
</dbReference>
<dbReference type="PANTHER" id="PTHR10489">
    <property type="entry name" value="CELL ADHESION MOLECULE"/>
    <property type="match status" value="1"/>
</dbReference>
<dbReference type="Pfam" id="PF00001">
    <property type="entry name" value="7tm_1"/>
    <property type="match status" value="1"/>
</dbReference>
<dbReference type="PRINTS" id="PR00657">
    <property type="entry name" value="CCCHEMOKINER"/>
</dbReference>
<dbReference type="PRINTS" id="PR01110">
    <property type="entry name" value="CHEMOKINER5"/>
</dbReference>
<dbReference type="PRINTS" id="PR00237">
    <property type="entry name" value="GPCRRHODOPSN"/>
</dbReference>
<dbReference type="SUPFAM" id="SSF81321">
    <property type="entry name" value="Family A G protein-coupled receptor-like"/>
    <property type="match status" value="1"/>
</dbReference>
<dbReference type="PROSITE" id="PS00237">
    <property type="entry name" value="G_PROTEIN_RECEP_F1_1"/>
    <property type="match status" value="1"/>
</dbReference>
<dbReference type="PROSITE" id="PS50262">
    <property type="entry name" value="G_PROTEIN_RECEP_F1_2"/>
    <property type="match status" value="1"/>
</dbReference>
<gene>
    <name type="primary">CCR5</name>
    <name type="synonym">CMKBR5</name>
</gene>